<dbReference type="EC" id="2.5.1.16" evidence="1"/>
<dbReference type="EMBL" id="AE017221">
    <property type="protein sequence ID" value="AAS80820.1"/>
    <property type="molecule type" value="Genomic_DNA"/>
</dbReference>
<dbReference type="RefSeq" id="WP_011172918.1">
    <property type="nucleotide sequence ID" value="NC_005835.1"/>
</dbReference>
<dbReference type="SMR" id="Q72K55"/>
<dbReference type="GeneID" id="3168303"/>
<dbReference type="KEGG" id="tth:TT_C0472"/>
<dbReference type="eggNOG" id="COG0421">
    <property type="taxonomic scope" value="Bacteria"/>
</dbReference>
<dbReference type="HOGENOM" id="CLU_048199_0_1_0"/>
<dbReference type="OrthoDB" id="9793120at2"/>
<dbReference type="UniPathway" id="UPA00248">
    <property type="reaction ID" value="UER00314"/>
</dbReference>
<dbReference type="Proteomes" id="UP000000592">
    <property type="component" value="Chromosome"/>
</dbReference>
<dbReference type="GO" id="GO:0005737">
    <property type="term" value="C:cytoplasm"/>
    <property type="evidence" value="ECO:0007669"/>
    <property type="project" value="UniProtKB-SubCell"/>
</dbReference>
<dbReference type="GO" id="GO:0004766">
    <property type="term" value="F:spermidine synthase activity"/>
    <property type="evidence" value="ECO:0007669"/>
    <property type="project" value="UniProtKB-UniRule"/>
</dbReference>
<dbReference type="GO" id="GO:0010487">
    <property type="term" value="F:thermospermine synthase activity"/>
    <property type="evidence" value="ECO:0007669"/>
    <property type="project" value="UniProtKB-ARBA"/>
</dbReference>
<dbReference type="GO" id="GO:0008295">
    <property type="term" value="P:spermidine biosynthetic process"/>
    <property type="evidence" value="ECO:0007669"/>
    <property type="project" value="UniProtKB-UniRule"/>
</dbReference>
<dbReference type="CDD" id="cd02440">
    <property type="entry name" value="AdoMet_MTases"/>
    <property type="match status" value="1"/>
</dbReference>
<dbReference type="FunFam" id="3.40.50.150:FF:000088">
    <property type="entry name" value="Polyamine aminopropyltransferase"/>
    <property type="match status" value="1"/>
</dbReference>
<dbReference type="Gene3D" id="2.30.140.10">
    <property type="entry name" value="Spermidine synthase, tetramerisation domain"/>
    <property type="match status" value="1"/>
</dbReference>
<dbReference type="Gene3D" id="3.40.50.150">
    <property type="entry name" value="Vaccinia Virus protein VP39"/>
    <property type="match status" value="1"/>
</dbReference>
<dbReference type="HAMAP" id="MF_00198">
    <property type="entry name" value="Spermidine_synth"/>
    <property type="match status" value="1"/>
</dbReference>
<dbReference type="InterPro" id="IPR030374">
    <property type="entry name" value="PABS"/>
</dbReference>
<dbReference type="InterPro" id="IPR030373">
    <property type="entry name" value="PABS_CS"/>
</dbReference>
<dbReference type="InterPro" id="IPR029063">
    <property type="entry name" value="SAM-dependent_MTases_sf"/>
</dbReference>
<dbReference type="InterPro" id="IPR001045">
    <property type="entry name" value="Spermi_synthase"/>
</dbReference>
<dbReference type="InterPro" id="IPR035246">
    <property type="entry name" value="Spermidine_synt_N"/>
</dbReference>
<dbReference type="InterPro" id="IPR037163">
    <property type="entry name" value="Spermidine_synt_N_sf"/>
</dbReference>
<dbReference type="NCBIfam" id="NF037959">
    <property type="entry name" value="MFS_SpdSyn"/>
    <property type="match status" value="1"/>
</dbReference>
<dbReference type="NCBIfam" id="NF002010">
    <property type="entry name" value="PRK00811.1"/>
    <property type="match status" value="1"/>
</dbReference>
<dbReference type="PANTHER" id="PTHR43317">
    <property type="entry name" value="THERMOSPERMINE SYNTHASE ACAULIS5"/>
    <property type="match status" value="1"/>
</dbReference>
<dbReference type="PANTHER" id="PTHR43317:SF1">
    <property type="entry name" value="THERMOSPERMINE SYNTHASE ACAULIS5"/>
    <property type="match status" value="1"/>
</dbReference>
<dbReference type="Pfam" id="PF17284">
    <property type="entry name" value="Spermine_synt_N"/>
    <property type="match status" value="1"/>
</dbReference>
<dbReference type="Pfam" id="PF01564">
    <property type="entry name" value="Spermine_synth"/>
    <property type="match status" value="1"/>
</dbReference>
<dbReference type="SUPFAM" id="SSF53335">
    <property type="entry name" value="S-adenosyl-L-methionine-dependent methyltransferases"/>
    <property type="match status" value="1"/>
</dbReference>
<dbReference type="PROSITE" id="PS01330">
    <property type="entry name" value="PABS_1"/>
    <property type="match status" value="1"/>
</dbReference>
<dbReference type="PROSITE" id="PS51006">
    <property type="entry name" value="PABS_2"/>
    <property type="match status" value="1"/>
</dbReference>
<proteinExistence type="inferred from homology"/>
<evidence type="ECO:0000255" key="1">
    <source>
        <dbReference type="HAMAP-Rule" id="MF_00198"/>
    </source>
</evidence>
<organism>
    <name type="scientific">Thermus thermophilus (strain ATCC BAA-163 / DSM 7039 / HB27)</name>
    <dbReference type="NCBI Taxonomy" id="262724"/>
    <lineage>
        <taxon>Bacteria</taxon>
        <taxon>Thermotogati</taxon>
        <taxon>Deinococcota</taxon>
        <taxon>Deinococci</taxon>
        <taxon>Thermales</taxon>
        <taxon>Thermaceae</taxon>
        <taxon>Thermus</taxon>
    </lineage>
</organism>
<keyword id="KW-0963">Cytoplasm</keyword>
<keyword id="KW-0620">Polyamine biosynthesis</keyword>
<keyword id="KW-0745">Spermidine biosynthesis</keyword>
<keyword id="KW-0808">Transferase</keyword>
<name>SPEE_THET2</name>
<sequence length="314" mass="36006">MDYGMYFFEHVTPYETLVRRMERVIASGKTPFQDYFLFESKGFGKVLILDKDVQSTERDEYIYHETLVHPAMLTHPEPKRVLIVGGGEGATLREVLKHPTVEKAVMVDIDGELVEVAKRHMPEWHQGAFDDPRAVLVIDDARAYLERTEERYDVVIIDLTDPVGEDNPARLLYTVEFYRLVKAHLNPGGVMGMQAGMILLTHHRVHPVVHRTVREAFRYVRSYKNHIPGFFLNFGFLLASDAFDPAAFSEGVIEARIRERNLALRHLTAPYLEAMFVLPKDLLEALEKETMVSTDQNPFYVTPEGEARQAPYKG</sequence>
<accession>Q72K55</accession>
<protein>
    <recommendedName>
        <fullName evidence="1">Polyamine aminopropyltransferase</fullName>
    </recommendedName>
    <alternativeName>
        <fullName evidence="1">Putrescine aminopropyltransferase</fullName>
        <shortName evidence="1">PAPT</shortName>
    </alternativeName>
    <alternativeName>
        <fullName evidence="1">Spermidine synthase</fullName>
        <shortName evidence="1">SPDS</shortName>
        <shortName evidence="1">SPDSY</shortName>
        <ecNumber evidence="1">2.5.1.16</ecNumber>
    </alternativeName>
</protein>
<gene>
    <name evidence="1" type="primary">speE</name>
    <name type="ordered locus">TT_C0472</name>
</gene>
<comment type="function">
    <text evidence="1">Catalyzes the irreversible transfer of a propylamine group from the amino donor S-adenosylmethioninamine (decarboxy-AdoMet) to putrescine (1,4-diaminobutane) to yield spermidine.</text>
</comment>
<comment type="catalytic activity">
    <reaction evidence="1">
        <text>S-adenosyl 3-(methylsulfanyl)propylamine + putrescine = S-methyl-5'-thioadenosine + spermidine + H(+)</text>
        <dbReference type="Rhea" id="RHEA:12721"/>
        <dbReference type="ChEBI" id="CHEBI:15378"/>
        <dbReference type="ChEBI" id="CHEBI:17509"/>
        <dbReference type="ChEBI" id="CHEBI:57443"/>
        <dbReference type="ChEBI" id="CHEBI:57834"/>
        <dbReference type="ChEBI" id="CHEBI:326268"/>
        <dbReference type="EC" id="2.5.1.16"/>
    </reaction>
</comment>
<comment type="pathway">
    <text evidence="1">Amine and polyamine biosynthesis; spermidine biosynthesis; spermidine from putrescine: step 1/1.</text>
</comment>
<comment type="subunit">
    <text evidence="1">Homodimer or homotetramer.</text>
</comment>
<comment type="subcellular location">
    <subcellularLocation>
        <location evidence="1">Cytoplasm</location>
    </subcellularLocation>
</comment>
<comment type="similarity">
    <text evidence="1">Belongs to the spermidine/spermine synthase family.</text>
</comment>
<feature type="chain" id="PRO_1000012027" description="Polyamine aminopropyltransferase">
    <location>
        <begin position="1"/>
        <end position="314"/>
    </location>
</feature>
<feature type="domain" description="PABS" evidence="1">
    <location>
        <begin position="4"/>
        <end position="241"/>
    </location>
</feature>
<feature type="active site" description="Proton acceptor" evidence="1">
    <location>
        <position position="158"/>
    </location>
</feature>
<feature type="binding site" evidence="1">
    <location>
        <position position="33"/>
    </location>
    <ligand>
        <name>S-methyl-5'-thioadenosine</name>
        <dbReference type="ChEBI" id="CHEBI:17509"/>
    </ligand>
</feature>
<feature type="binding site" evidence="1">
    <location>
        <position position="64"/>
    </location>
    <ligand>
        <name>spermidine</name>
        <dbReference type="ChEBI" id="CHEBI:57834"/>
    </ligand>
</feature>
<feature type="binding site" evidence="1">
    <location>
        <position position="88"/>
    </location>
    <ligand>
        <name>spermidine</name>
        <dbReference type="ChEBI" id="CHEBI:57834"/>
    </ligand>
</feature>
<feature type="binding site" evidence="1">
    <location>
        <position position="108"/>
    </location>
    <ligand>
        <name>S-methyl-5'-thioadenosine</name>
        <dbReference type="ChEBI" id="CHEBI:17509"/>
    </ligand>
</feature>
<feature type="binding site" evidence="1">
    <location>
        <begin position="140"/>
        <end position="141"/>
    </location>
    <ligand>
        <name>S-methyl-5'-thioadenosine</name>
        <dbReference type="ChEBI" id="CHEBI:17509"/>
    </ligand>
</feature>
<feature type="binding site" evidence="1">
    <location>
        <position position="168"/>
    </location>
    <ligand>
        <name>S-methyl-5'-thioadenosine</name>
        <dbReference type="ChEBI" id="CHEBI:17509"/>
    </ligand>
</feature>
<reference key="1">
    <citation type="journal article" date="2004" name="Nat. Biotechnol.">
        <title>The genome sequence of the extreme thermophile Thermus thermophilus.</title>
        <authorList>
            <person name="Henne A."/>
            <person name="Brueggemann H."/>
            <person name="Raasch C."/>
            <person name="Wiezer A."/>
            <person name="Hartsch T."/>
            <person name="Liesegang H."/>
            <person name="Johann A."/>
            <person name="Lienard T."/>
            <person name="Gohl O."/>
            <person name="Martinez-Arias R."/>
            <person name="Jacobi C."/>
            <person name="Starkuviene V."/>
            <person name="Schlenczeck S."/>
            <person name="Dencker S."/>
            <person name="Huber R."/>
            <person name="Klenk H.-P."/>
            <person name="Kramer W."/>
            <person name="Merkl R."/>
            <person name="Gottschalk G."/>
            <person name="Fritz H.-J."/>
        </authorList>
    </citation>
    <scope>NUCLEOTIDE SEQUENCE [LARGE SCALE GENOMIC DNA]</scope>
    <source>
        <strain>ATCC BAA-163 / DSM 7039 / HB27</strain>
    </source>
</reference>